<name>MIAB_CAMC5</name>
<gene>
    <name evidence="1" type="primary">miaB</name>
    <name type="ordered locus">Ccur92_12790</name>
    <name type="ORF">CCV52592_0260</name>
</gene>
<keyword id="KW-0004">4Fe-4S</keyword>
<keyword id="KW-0963">Cytoplasm</keyword>
<keyword id="KW-0408">Iron</keyword>
<keyword id="KW-0411">Iron-sulfur</keyword>
<keyword id="KW-0479">Metal-binding</keyword>
<keyword id="KW-1185">Reference proteome</keyword>
<keyword id="KW-0949">S-adenosyl-L-methionine</keyword>
<keyword id="KW-0808">Transferase</keyword>
<keyword id="KW-0819">tRNA processing</keyword>
<sequence>MSKKLFIQTLGCAMNVRDSEHIIAELSQKEDYTLTQNLEEADLILINTCSVREKPVHKLFSEVGAFEKAKKNGAKIGVCGCTASHLGDEIFKRAPYVDFVLGARNVSKISTAVKTPKFISTDINHDESEYAFGEFRGSPYKSHINISIGCDKKCTYCIVPHTRGDEISIPANLILREVEKAATNGAKEIFLLGQNVNNYGKRFSGAHEKIDFSDLLVRISEVAGVERIRFTSPHPLHMDDKFLEIFSQNPKICKSMHMPLQSGNTKVLREMKRGYTKEWFLDRAAKLREMCPDVSISTDIIVAFPGESDAEFEDTMDVLERVKFEQIFSFKYSPRPMTKAAEFTNQIDEATASARLTRLQSRHNEILDEIVAAQEGKILDVYFEELRANGGVAGRSFNNFLVQVNGSEELLGRTLKVKITDTKRMVLYGELAN</sequence>
<reference key="1">
    <citation type="submission" date="2007-07" db="EMBL/GenBank/DDBJ databases">
        <title>Genome sequence of Campylobacter curvus 525.92 isolated from human feces.</title>
        <authorList>
            <person name="Fouts D.E."/>
            <person name="Mongodin E.F."/>
            <person name="Puiu D."/>
            <person name="Sebastian Y."/>
            <person name="Miller W.G."/>
            <person name="Mandrell R.E."/>
            <person name="Lastovica A.J."/>
            <person name="Nelson K.E."/>
        </authorList>
    </citation>
    <scope>NUCLEOTIDE SEQUENCE [LARGE SCALE GENOMIC DNA]</scope>
    <source>
        <strain>525.92</strain>
    </source>
</reference>
<proteinExistence type="inferred from homology"/>
<comment type="function">
    <text evidence="1">Catalyzes the methylthiolation of N6-(dimethylallyl)adenosine (i(6)A), leading to the formation of 2-methylthio-N6-(dimethylallyl)adenosine (ms(2)i(6)A) at position 37 in tRNAs that read codons beginning with uridine.</text>
</comment>
<comment type="catalytic activity">
    <reaction evidence="1">
        <text>N(6)-dimethylallyladenosine(37) in tRNA + (sulfur carrier)-SH + AH2 + 2 S-adenosyl-L-methionine = 2-methylsulfanyl-N(6)-dimethylallyladenosine(37) in tRNA + (sulfur carrier)-H + 5'-deoxyadenosine + L-methionine + A + S-adenosyl-L-homocysteine + 2 H(+)</text>
        <dbReference type="Rhea" id="RHEA:37067"/>
        <dbReference type="Rhea" id="RHEA-COMP:10375"/>
        <dbReference type="Rhea" id="RHEA-COMP:10376"/>
        <dbReference type="Rhea" id="RHEA-COMP:14737"/>
        <dbReference type="Rhea" id="RHEA-COMP:14739"/>
        <dbReference type="ChEBI" id="CHEBI:13193"/>
        <dbReference type="ChEBI" id="CHEBI:15378"/>
        <dbReference type="ChEBI" id="CHEBI:17319"/>
        <dbReference type="ChEBI" id="CHEBI:17499"/>
        <dbReference type="ChEBI" id="CHEBI:29917"/>
        <dbReference type="ChEBI" id="CHEBI:57844"/>
        <dbReference type="ChEBI" id="CHEBI:57856"/>
        <dbReference type="ChEBI" id="CHEBI:59789"/>
        <dbReference type="ChEBI" id="CHEBI:64428"/>
        <dbReference type="ChEBI" id="CHEBI:74415"/>
        <dbReference type="ChEBI" id="CHEBI:74417"/>
        <dbReference type="EC" id="2.8.4.3"/>
    </reaction>
</comment>
<comment type="cofactor">
    <cofactor evidence="1">
        <name>[4Fe-4S] cluster</name>
        <dbReference type="ChEBI" id="CHEBI:49883"/>
    </cofactor>
    <text evidence="1">Binds 2 [4Fe-4S] clusters. One cluster is coordinated with 3 cysteines and an exchangeable S-adenosyl-L-methionine.</text>
</comment>
<comment type="subunit">
    <text evidence="1">Monomer.</text>
</comment>
<comment type="subcellular location">
    <subcellularLocation>
        <location evidence="1">Cytoplasm</location>
    </subcellularLocation>
</comment>
<comment type="similarity">
    <text evidence="1">Belongs to the methylthiotransferase family. MiaB subfamily.</text>
</comment>
<comment type="sequence caution" evidence="3">
    <conflict type="erroneous initiation">
        <sequence resource="EMBL-CDS" id="EAU01325"/>
    </conflict>
</comment>
<accession>A7GZE1</accession>
<organism>
    <name type="scientific">Campylobacter curvus (strain 525.92)</name>
    <dbReference type="NCBI Taxonomy" id="360105"/>
    <lineage>
        <taxon>Bacteria</taxon>
        <taxon>Pseudomonadati</taxon>
        <taxon>Campylobacterota</taxon>
        <taxon>Epsilonproteobacteria</taxon>
        <taxon>Campylobacterales</taxon>
        <taxon>Campylobacteraceae</taxon>
        <taxon>Campylobacter</taxon>
    </lineage>
</organism>
<dbReference type="EC" id="2.8.4.3" evidence="1"/>
<dbReference type="EMBL" id="CP000767">
    <property type="protein sequence ID" value="EAU01325.2"/>
    <property type="status" value="ALT_INIT"/>
    <property type="molecule type" value="Genomic_DNA"/>
</dbReference>
<dbReference type="RefSeq" id="WP_041743339.1">
    <property type="nucleotide sequence ID" value="NC_009715.2"/>
</dbReference>
<dbReference type="SMR" id="A7GZE1"/>
<dbReference type="STRING" id="360105.CCV52592_0260"/>
<dbReference type="KEGG" id="ccv:CCV52592_0260"/>
<dbReference type="HOGENOM" id="CLU_018697_2_0_7"/>
<dbReference type="OrthoDB" id="9805215at2"/>
<dbReference type="Proteomes" id="UP000006380">
    <property type="component" value="Chromosome"/>
</dbReference>
<dbReference type="GO" id="GO:0005829">
    <property type="term" value="C:cytosol"/>
    <property type="evidence" value="ECO:0007669"/>
    <property type="project" value="TreeGrafter"/>
</dbReference>
<dbReference type="GO" id="GO:0051539">
    <property type="term" value="F:4 iron, 4 sulfur cluster binding"/>
    <property type="evidence" value="ECO:0007669"/>
    <property type="project" value="UniProtKB-UniRule"/>
</dbReference>
<dbReference type="GO" id="GO:0046872">
    <property type="term" value="F:metal ion binding"/>
    <property type="evidence" value="ECO:0007669"/>
    <property type="project" value="UniProtKB-KW"/>
</dbReference>
<dbReference type="GO" id="GO:0035597">
    <property type="term" value="F:N6-isopentenyladenosine methylthiotransferase activity"/>
    <property type="evidence" value="ECO:0007669"/>
    <property type="project" value="TreeGrafter"/>
</dbReference>
<dbReference type="CDD" id="cd01335">
    <property type="entry name" value="Radical_SAM"/>
    <property type="match status" value="1"/>
</dbReference>
<dbReference type="FunFam" id="3.40.50.12160:FF:000003">
    <property type="entry name" value="CDK5 regulatory subunit-associated protein 1"/>
    <property type="match status" value="1"/>
</dbReference>
<dbReference type="FunFam" id="3.80.30.20:FF:000001">
    <property type="entry name" value="tRNA-2-methylthio-N(6)-dimethylallyladenosine synthase 2"/>
    <property type="match status" value="1"/>
</dbReference>
<dbReference type="Gene3D" id="3.40.50.12160">
    <property type="entry name" value="Methylthiotransferase, N-terminal domain"/>
    <property type="match status" value="1"/>
</dbReference>
<dbReference type="Gene3D" id="3.80.30.20">
    <property type="entry name" value="tm_1862 like domain"/>
    <property type="match status" value="1"/>
</dbReference>
<dbReference type="HAMAP" id="MF_01864">
    <property type="entry name" value="tRNA_metthiotr_MiaB"/>
    <property type="match status" value="1"/>
</dbReference>
<dbReference type="InterPro" id="IPR006638">
    <property type="entry name" value="Elp3/MiaA/NifB-like_rSAM"/>
</dbReference>
<dbReference type="InterPro" id="IPR005839">
    <property type="entry name" value="Methylthiotransferase"/>
</dbReference>
<dbReference type="InterPro" id="IPR020612">
    <property type="entry name" value="Methylthiotransferase_CS"/>
</dbReference>
<dbReference type="InterPro" id="IPR013848">
    <property type="entry name" value="Methylthiotransferase_N"/>
</dbReference>
<dbReference type="InterPro" id="IPR038135">
    <property type="entry name" value="Methylthiotransferase_N_sf"/>
</dbReference>
<dbReference type="InterPro" id="IPR006463">
    <property type="entry name" value="MiaB_methiolase"/>
</dbReference>
<dbReference type="InterPro" id="IPR007197">
    <property type="entry name" value="rSAM"/>
</dbReference>
<dbReference type="InterPro" id="IPR023404">
    <property type="entry name" value="rSAM_horseshoe"/>
</dbReference>
<dbReference type="InterPro" id="IPR002792">
    <property type="entry name" value="TRAM_dom"/>
</dbReference>
<dbReference type="NCBIfam" id="TIGR01574">
    <property type="entry name" value="miaB-methiolase"/>
    <property type="match status" value="1"/>
</dbReference>
<dbReference type="NCBIfam" id="TIGR00089">
    <property type="entry name" value="MiaB/RimO family radical SAM methylthiotransferase"/>
    <property type="match status" value="1"/>
</dbReference>
<dbReference type="PANTHER" id="PTHR43020">
    <property type="entry name" value="CDK5 REGULATORY SUBUNIT-ASSOCIATED PROTEIN 1"/>
    <property type="match status" value="1"/>
</dbReference>
<dbReference type="PANTHER" id="PTHR43020:SF2">
    <property type="entry name" value="MITOCHONDRIAL TRNA METHYLTHIOTRANSFERASE CDK5RAP1"/>
    <property type="match status" value="1"/>
</dbReference>
<dbReference type="Pfam" id="PF04055">
    <property type="entry name" value="Radical_SAM"/>
    <property type="match status" value="1"/>
</dbReference>
<dbReference type="Pfam" id="PF01938">
    <property type="entry name" value="TRAM"/>
    <property type="match status" value="1"/>
</dbReference>
<dbReference type="Pfam" id="PF00919">
    <property type="entry name" value="UPF0004"/>
    <property type="match status" value="1"/>
</dbReference>
<dbReference type="SFLD" id="SFLDF00273">
    <property type="entry name" value="(dimethylallyl)adenosine_tRNA"/>
    <property type="match status" value="1"/>
</dbReference>
<dbReference type="SFLD" id="SFLDG01082">
    <property type="entry name" value="B12-binding_domain_containing"/>
    <property type="match status" value="1"/>
</dbReference>
<dbReference type="SFLD" id="SFLDG01061">
    <property type="entry name" value="methylthiotransferase"/>
    <property type="match status" value="1"/>
</dbReference>
<dbReference type="SMART" id="SM00729">
    <property type="entry name" value="Elp3"/>
    <property type="match status" value="1"/>
</dbReference>
<dbReference type="SUPFAM" id="SSF102114">
    <property type="entry name" value="Radical SAM enzymes"/>
    <property type="match status" value="1"/>
</dbReference>
<dbReference type="PROSITE" id="PS51449">
    <property type="entry name" value="MTTASE_N"/>
    <property type="match status" value="1"/>
</dbReference>
<dbReference type="PROSITE" id="PS01278">
    <property type="entry name" value="MTTASE_RADICAL"/>
    <property type="match status" value="1"/>
</dbReference>
<dbReference type="PROSITE" id="PS51918">
    <property type="entry name" value="RADICAL_SAM"/>
    <property type="match status" value="1"/>
</dbReference>
<dbReference type="PROSITE" id="PS50926">
    <property type="entry name" value="TRAM"/>
    <property type="match status" value="1"/>
</dbReference>
<evidence type="ECO:0000255" key="1">
    <source>
        <dbReference type="HAMAP-Rule" id="MF_01864"/>
    </source>
</evidence>
<evidence type="ECO:0000255" key="2">
    <source>
        <dbReference type="PROSITE-ProRule" id="PRU01266"/>
    </source>
</evidence>
<evidence type="ECO:0000305" key="3"/>
<feature type="chain" id="PRO_0000374195" description="tRNA-2-methylthio-N(6)-dimethylallyladenosine synthase">
    <location>
        <begin position="1"/>
        <end position="433"/>
    </location>
</feature>
<feature type="domain" description="MTTase N-terminal" evidence="1">
    <location>
        <begin position="3"/>
        <end position="118"/>
    </location>
</feature>
<feature type="domain" description="Radical SAM core" evidence="2">
    <location>
        <begin position="136"/>
        <end position="369"/>
    </location>
</feature>
<feature type="domain" description="TRAM" evidence="1">
    <location>
        <begin position="372"/>
        <end position="433"/>
    </location>
</feature>
<feature type="binding site" evidence="1">
    <location>
        <position position="12"/>
    </location>
    <ligand>
        <name>[4Fe-4S] cluster</name>
        <dbReference type="ChEBI" id="CHEBI:49883"/>
        <label>1</label>
    </ligand>
</feature>
<feature type="binding site" evidence="1">
    <location>
        <position position="49"/>
    </location>
    <ligand>
        <name>[4Fe-4S] cluster</name>
        <dbReference type="ChEBI" id="CHEBI:49883"/>
        <label>1</label>
    </ligand>
</feature>
<feature type="binding site" evidence="1">
    <location>
        <position position="81"/>
    </location>
    <ligand>
        <name>[4Fe-4S] cluster</name>
        <dbReference type="ChEBI" id="CHEBI:49883"/>
        <label>1</label>
    </ligand>
</feature>
<feature type="binding site" evidence="1">
    <location>
        <position position="150"/>
    </location>
    <ligand>
        <name>[4Fe-4S] cluster</name>
        <dbReference type="ChEBI" id="CHEBI:49883"/>
        <label>2</label>
        <note>4Fe-4S-S-AdoMet</note>
    </ligand>
</feature>
<feature type="binding site" evidence="1">
    <location>
        <position position="154"/>
    </location>
    <ligand>
        <name>[4Fe-4S] cluster</name>
        <dbReference type="ChEBI" id="CHEBI:49883"/>
        <label>2</label>
        <note>4Fe-4S-S-AdoMet</note>
    </ligand>
</feature>
<feature type="binding site" evidence="1">
    <location>
        <position position="157"/>
    </location>
    <ligand>
        <name>[4Fe-4S] cluster</name>
        <dbReference type="ChEBI" id="CHEBI:49883"/>
        <label>2</label>
        <note>4Fe-4S-S-AdoMet</note>
    </ligand>
</feature>
<protein>
    <recommendedName>
        <fullName evidence="1">tRNA-2-methylthio-N(6)-dimethylallyladenosine synthase</fullName>
        <ecNumber evidence="1">2.8.4.3</ecNumber>
    </recommendedName>
    <alternativeName>
        <fullName evidence="1">(Dimethylallyl)adenosine tRNA methylthiotransferase MiaB</fullName>
    </alternativeName>
    <alternativeName>
        <fullName evidence="1">tRNA-i(6)A37 methylthiotransferase</fullName>
    </alternativeName>
</protein>